<accession>A0PP21</accession>
<proteinExistence type="inferred from homology"/>
<feature type="chain" id="PRO_1000063419" description="Phosphoribosyl-AMP cyclohydrolase">
    <location>
        <begin position="1"/>
        <end position="111"/>
    </location>
</feature>
<feature type="binding site" evidence="1">
    <location>
        <position position="80"/>
    </location>
    <ligand>
        <name>Mg(2+)</name>
        <dbReference type="ChEBI" id="CHEBI:18420"/>
    </ligand>
</feature>
<feature type="binding site" evidence="1">
    <location>
        <position position="81"/>
    </location>
    <ligand>
        <name>Zn(2+)</name>
        <dbReference type="ChEBI" id="CHEBI:29105"/>
        <note>ligand shared between dimeric partners</note>
    </ligand>
</feature>
<feature type="binding site" evidence="1">
    <location>
        <position position="82"/>
    </location>
    <ligand>
        <name>Mg(2+)</name>
        <dbReference type="ChEBI" id="CHEBI:18420"/>
    </ligand>
</feature>
<feature type="binding site" evidence="1">
    <location>
        <position position="84"/>
    </location>
    <ligand>
        <name>Mg(2+)</name>
        <dbReference type="ChEBI" id="CHEBI:18420"/>
    </ligand>
</feature>
<feature type="binding site" evidence="1">
    <location>
        <position position="97"/>
    </location>
    <ligand>
        <name>Zn(2+)</name>
        <dbReference type="ChEBI" id="CHEBI:29105"/>
        <note>ligand shared between dimeric partners</note>
    </ligand>
</feature>
<feature type="binding site" evidence="1">
    <location>
        <position position="104"/>
    </location>
    <ligand>
        <name>Zn(2+)</name>
        <dbReference type="ChEBI" id="CHEBI:29105"/>
        <note>ligand shared between dimeric partners</note>
    </ligand>
</feature>
<keyword id="KW-0028">Amino-acid biosynthesis</keyword>
<keyword id="KW-0963">Cytoplasm</keyword>
<keyword id="KW-0368">Histidine biosynthesis</keyword>
<keyword id="KW-0378">Hydrolase</keyword>
<keyword id="KW-0460">Magnesium</keyword>
<keyword id="KW-0479">Metal-binding</keyword>
<keyword id="KW-0862">Zinc</keyword>
<evidence type="ECO:0000255" key="1">
    <source>
        <dbReference type="HAMAP-Rule" id="MF_01021"/>
    </source>
</evidence>
<comment type="function">
    <text evidence="1">Catalyzes the hydrolysis of the adenine ring of phosphoribosyl-AMP.</text>
</comment>
<comment type="catalytic activity">
    <reaction evidence="1">
        <text>1-(5-phospho-beta-D-ribosyl)-5'-AMP + H2O = 1-(5-phospho-beta-D-ribosyl)-5-[(5-phospho-beta-D-ribosylamino)methylideneamino]imidazole-4-carboxamide</text>
        <dbReference type="Rhea" id="RHEA:20049"/>
        <dbReference type="ChEBI" id="CHEBI:15377"/>
        <dbReference type="ChEBI" id="CHEBI:58435"/>
        <dbReference type="ChEBI" id="CHEBI:59457"/>
        <dbReference type="EC" id="3.5.4.19"/>
    </reaction>
</comment>
<comment type="cofactor">
    <cofactor evidence="1">
        <name>Mg(2+)</name>
        <dbReference type="ChEBI" id="CHEBI:18420"/>
    </cofactor>
    <text evidence="1">Binds 1 Mg(2+) ion per subunit.</text>
</comment>
<comment type="cofactor">
    <cofactor evidence="1">
        <name>Zn(2+)</name>
        <dbReference type="ChEBI" id="CHEBI:29105"/>
    </cofactor>
    <text evidence="1">Binds 1 zinc ion per subunit.</text>
</comment>
<comment type="pathway">
    <text evidence="1">Amino-acid biosynthesis; L-histidine biosynthesis; L-histidine from 5-phospho-alpha-D-ribose 1-diphosphate: step 3/9.</text>
</comment>
<comment type="subunit">
    <text evidence="1">Homodimer.</text>
</comment>
<comment type="subcellular location">
    <subcellularLocation>
        <location evidence="1">Cytoplasm</location>
    </subcellularLocation>
</comment>
<comment type="similarity">
    <text evidence="1">Belongs to the PRA-CH family.</text>
</comment>
<dbReference type="EC" id="3.5.4.19" evidence="1"/>
<dbReference type="EMBL" id="CP000325">
    <property type="protein sequence ID" value="ABL04090.1"/>
    <property type="molecule type" value="Genomic_DNA"/>
</dbReference>
<dbReference type="RefSeq" id="WP_011739710.1">
    <property type="nucleotide sequence ID" value="NC_008611.1"/>
</dbReference>
<dbReference type="SMR" id="A0PP21"/>
<dbReference type="GeneID" id="93437377"/>
<dbReference type="KEGG" id="mul:MUL_1579"/>
<dbReference type="eggNOG" id="COG0139">
    <property type="taxonomic scope" value="Bacteria"/>
</dbReference>
<dbReference type="HOGENOM" id="CLU_048577_5_1_11"/>
<dbReference type="UniPathway" id="UPA00031">
    <property type="reaction ID" value="UER00008"/>
</dbReference>
<dbReference type="Proteomes" id="UP000000765">
    <property type="component" value="Chromosome"/>
</dbReference>
<dbReference type="GO" id="GO:0005737">
    <property type="term" value="C:cytoplasm"/>
    <property type="evidence" value="ECO:0007669"/>
    <property type="project" value="UniProtKB-SubCell"/>
</dbReference>
<dbReference type="GO" id="GO:0000287">
    <property type="term" value="F:magnesium ion binding"/>
    <property type="evidence" value="ECO:0007669"/>
    <property type="project" value="UniProtKB-UniRule"/>
</dbReference>
<dbReference type="GO" id="GO:0004635">
    <property type="term" value="F:phosphoribosyl-AMP cyclohydrolase activity"/>
    <property type="evidence" value="ECO:0007669"/>
    <property type="project" value="UniProtKB-UniRule"/>
</dbReference>
<dbReference type="GO" id="GO:0008270">
    <property type="term" value="F:zinc ion binding"/>
    <property type="evidence" value="ECO:0007669"/>
    <property type="project" value="UniProtKB-UniRule"/>
</dbReference>
<dbReference type="GO" id="GO:0000105">
    <property type="term" value="P:L-histidine biosynthetic process"/>
    <property type="evidence" value="ECO:0007669"/>
    <property type="project" value="UniProtKB-UniRule"/>
</dbReference>
<dbReference type="FunFam" id="3.10.20.810:FF:000001">
    <property type="entry name" value="Histidine biosynthesis bifunctional protein HisIE"/>
    <property type="match status" value="1"/>
</dbReference>
<dbReference type="Gene3D" id="3.10.20.810">
    <property type="entry name" value="Phosphoribosyl-AMP cyclohydrolase"/>
    <property type="match status" value="1"/>
</dbReference>
<dbReference type="HAMAP" id="MF_01021">
    <property type="entry name" value="HisI"/>
    <property type="match status" value="1"/>
</dbReference>
<dbReference type="InterPro" id="IPR026660">
    <property type="entry name" value="PRA-CH"/>
</dbReference>
<dbReference type="InterPro" id="IPR002496">
    <property type="entry name" value="PRib_AMP_CycHydrolase_dom"/>
</dbReference>
<dbReference type="InterPro" id="IPR038019">
    <property type="entry name" value="PRib_AMP_CycHydrolase_sf"/>
</dbReference>
<dbReference type="NCBIfam" id="NF000768">
    <property type="entry name" value="PRK00051.1"/>
    <property type="match status" value="1"/>
</dbReference>
<dbReference type="PANTHER" id="PTHR42945">
    <property type="entry name" value="HISTIDINE BIOSYNTHESIS BIFUNCTIONAL PROTEIN"/>
    <property type="match status" value="1"/>
</dbReference>
<dbReference type="PANTHER" id="PTHR42945:SF11">
    <property type="entry name" value="PHOSPHORIBOSYL-AMP CYCLOHYDROLASE"/>
    <property type="match status" value="1"/>
</dbReference>
<dbReference type="Pfam" id="PF01502">
    <property type="entry name" value="PRA-CH"/>
    <property type="match status" value="1"/>
</dbReference>
<dbReference type="SUPFAM" id="SSF141734">
    <property type="entry name" value="HisI-like"/>
    <property type="match status" value="1"/>
</dbReference>
<protein>
    <recommendedName>
        <fullName evidence="1">Phosphoribosyl-AMP cyclohydrolase</fullName>
        <shortName evidence="1">PRA-CH</shortName>
        <ecNumber evidence="1">3.5.4.19</ecNumber>
    </recommendedName>
</protein>
<reference key="1">
    <citation type="journal article" date="2007" name="Genome Res.">
        <title>Reductive evolution and niche adaptation inferred from the genome of Mycobacterium ulcerans, the causative agent of Buruli ulcer.</title>
        <authorList>
            <person name="Stinear T.P."/>
            <person name="Seemann T."/>
            <person name="Pidot S."/>
            <person name="Frigui W."/>
            <person name="Reysset G."/>
            <person name="Garnier T."/>
            <person name="Meurice G."/>
            <person name="Simon D."/>
            <person name="Bouchier C."/>
            <person name="Ma L."/>
            <person name="Tichit M."/>
            <person name="Porter J.L."/>
            <person name="Ryan J."/>
            <person name="Johnson P.D.R."/>
            <person name="Davies J.K."/>
            <person name="Jenkin G.A."/>
            <person name="Small P.L.C."/>
            <person name="Jones L.M."/>
            <person name="Tekaia F."/>
            <person name="Laval F."/>
            <person name="Daffe M."/>
            <person name="Parkhill J."/>
            <person name="Cole S.T."/>
        </authorList>
    </citation>
    <scope>NUCLEOTIDE SEQUENCE [LARGE SCALE GENOMIC DNA]</scope>
    <source>
        <strain>Agy99</strain>
    </source>
</reference>
<organism>
    <name type="scientific">Mycobacterium ulcerans (strain Agy99)</name>
    <dbReference type="NCBI Taxonomy" id="362242"/>
    <lineage>
        <taxon>Bacteria</taxon>
        <taxon>Bacillati</taxon>
        <taxon>Actinomycetota</taxon>
        <taxon>Actinomycetes</taxon>
        <taxon>Mycobacteriales</taxon>
        <taxon>Mycobacteriaceae</taxon>
        <taxon>Mycobacterium</taxon>
        <taxon>Mycobacterium ulcerans group</taxon>
    </lineage>
</organism>
<sequence length="111" mass="12146">MTLDPNVAARLKRNADGLFTAVVQERGSGDVLMVAWMDDDALDRTLKTREATYYSRSRGEQWVKGATSGHTQYVHSVRLDCDGDTVLLTVDQVGGACHTGDHTCFDATVLL</sequence>
<gene>
    <name evidence="1" type="primary">hisI</name>
    <name type="ordered locus">MUL_1579</name>
</gene>
<name>HIS3_MYCUA</name>